<name>SET9_ASPTN</name>
<proteinExistence type="inferred from homology"/>
<evidence type="ECO:0000250" key="1"/>
<evidence type="ECO:0000250" key="2">
    <source>
        <dbReference type="UniProtKB" id="Q9USK2"/>
    </source>
</evidence>
<evidence type="ECO:0000255" key="3">
    <source>
        <dbReference type="PROSITE-ProRule" id="PRU00190"/>
    </source>
</evidence>
<evidence type="ECO:0000255" key="4">
    <source>
        <dbReference type="PROSITE-ProRule" id="PRU00900"/>
    </source>
</evidence>
<evidence type="ECO:0000256" key="5">
    <source>
        <dbReference type="SAM" id="MobiDB-lite"/>
    </source>
</evidence>
<protein>
    <recommendedName>
        <fullName>Histone-lysine N-methyltransferase set9</fullName>
        <ecNumber evidence="2">2.1.1.372</ecNumber>
    </recommendedName>
    <alternativeName>
        <fullName>SET domain protein 9</fullName>
    </alternativeName>
</protein>
<keyword id="KW-0156">Chromatin regulator</keyword>
<keyword id="KW-0158">Chromosome</keyword>
<keyword id="KW-0489">Methyltransferase</keyword>
<keyword id="KW-0539">Nucleus</keyword>
<keyword id="KW-1185">Reference proteome</keyword>
<keyword id="KW-0949">S-adenosyl-L-methionine</keyword>
<keyword id="KW-0808">Transferase</keyword>
<gene>
    <name type="primary">set9</name>
    <name type="ORF">ATEG_09688</name>
</gene>
<dbReference type="EC" id="2.1.1.372" evidence="2"/>
<dbReference type="EMBL" id="CH476608">
    <property type="protein sequence ID" value="EAU29879.1"/>
    <property type="molecule type" value="Genomic_DNA"/>
</dbReference>
<dbReference type="RefSeq" id="XP_001218310.1">
    <property type="nucleotide sequence ID" value="XM_001218309.1"/>
</dbReference>
<dbReference type="SMR" id="Q0C9E6"/>
<dbReference type="STRING" id="341663.Q0C9E6"/>
<dbReference type="EnsemblFungi" id="EAU29879">
    <property type="protein sequence ID" value="EAU29879"/>
    <property type="gene ID" value="ATEG_09688"/>
</dbReference>
<dbReference type="GeneID" id="4354340"/>
<dbReference type="VEuPathDB" id="FungiDB:ATEG_09688"/>
<dbReference type="eggNOG" id="KOG2589">
    <property type="taxonomic scope" value="Eukaryota"/>
</dbReference>
<dbReference type="HOGENOM" id="CLU_013724_0_0_1"/>
<dbReference type="OMA" id="FANHDCG"/>
<dbReference type="OrthoDB" id="6627536at2759"/>
<dbReference type="Proteomes" id="UP000007963">
    <property type="component" value="Unassembled WGS sequence"/>
</dbReference>
<dbReference type="GO" id="GO:0005694">
    <property type="term" value="C:chromosome"/>
    <property type="evidence" value="ECO:0007669"/>
    <property type="project" value="UniProtKB-SubCell"/>
</dbReference>
<dbReference type="GO" id="GO:0005634">
    <property type="term" value="C:nucleus"/>
    <property type="evidence" value="ECO:0007669"/>
    <property type="project" value="UniProtKB-SubCell"/>
</dbReference>
<dbReference type="GO" id="GO:0140943">
    <property type="term" value="F:histone H4K20 trimethyltransferase activity"/>
    <property type="evidence" value="ECO:0007669"/>
    <property type="project" value="UniProtKB-EC"/>
</dbReference>
<dbReference type="GO" id="GO:0032259">
    <property type="term" value="P:methylation"/>
    <property type="evidence" value="ECO:0007669"/>
    <property type="project" value="UniProtKB-KW"/>
</dbReference>
<dbReference type="CDD" id="cd10524">
    <property type="entry name" value="SET_Suv4-20-like"/>
    <property type="match status" value="1"/>
</dbReference>
<dbReference type="Gene3D" id="1.10.10.1700">
    <property type="entry name" value="Histone-lysine N-methyltransferase"/>
    <property type="match status" value="1"/>
</dbReference>
<dbReference type="Gene3D" id="2.170.270.10">
    <property type="entry name" value="SET domain"/>
    <property type="match status" value="1"/>
</dbReference>
<dbReference type="InterPro" id="IPR041938">
    <property type="entry name" value="Hist-Lys_N-MTase_N"/>
</dbReference>
<dbReference type="InterPro" id="IPR025783">
    <property type="entry name" value="Set9_fungi"/>
</dbReference>
<dbReference type="InterPro" id="IPR001214">
    <property type="entry name" value="SET_dom"/>
</dbReference>
<dbReference type="InterPro" id="IPR046341">
    <property type="entry name" value="SET_dom_sf"/>
</dbReference>
<dbReference type="InterPro" id="IPR039977">
    <property type="entry name" value="Suv4-20/Set9"/>
</dbReference>
<dbReference type="PANTHER" id="PTHR12977:SF4">
    <property type="entry name" value="HISTONE-LYSINE N-METHYLTRANSFERASE KMT5B"/>
    <property type="match status" value="1"/>
</dbReference>
<dbReference type="PANTHER" id="PTHR12977">
    <property type="entry name" value="SUPPRESSOR OF VARIEGATION 4-20-RELATED"/>
    <property type="match status" value="1"/>
</dbReference>
<dbReference type="Pfam" id="PF00856">
    <property type="entry name" value="SET"/>
    <property type="match status" value="1"/>
</dbReference>
<dbReference type="SMART" id="SM00317">
    <property type="entry name" value="SET"/>
    <property type="match status" value="1"/>
</dbReference>
<dbReference type="SUPFAM" id="SSF82199">
    <property type="entry name" value="SET domain"/>
    <property type="match status" value="1"/>
</dbReference>
<dbReference type="PROSITE" id="PS51567">
    <property type="entry name" value="SAM_MT43_SUVAR420_1"/>
    <property type="match status" value="1"/>
</dbReference>
<dbReference type="PROSITE" id="PS50280">
    <property type="entry name" value="SET"/>
    <property type="match status" value="1"/>
</dbReference>
<reference key="1">
    <citation type="submission" date="2005-09" db="EMBL/GenBank/DDBJ databases">
        <title>Annotation of the Aspergillus terreus NIH2624 genome.</title>
        <authorList>
            <person name="Birren B.W."/>
            <person name="Lander E.S."/>
            <person name="Galagan J.E."/>
            <person name="Nusbaum C."/>
            <person name="Devon K."/>
            <person name="Henn M."/>
            <person name="Ma L.-J."/>
            <person name="Jaffe D.B."/>
            <person name="Butler J."/>
            <person name="Alvarez P."/>
            <person name="Gnerre S."/>
            <person name="Grabherr M."/>
            <person name="Kleber M."/>
            <person name="Mauceli E.W."/>
            <person name="Brockman W."/>
            <person name="Rounsley S."/>
            <person name="Young S.K."/>
            <person name="LaButti K."/>
            <person name="Pushparaj V."/>
            <person name="DeCaprio D."/>
            <person name="Crawford M."/>
            <person name="Koehrsen M."/>
            <person name="Engels R."/>
            <person name="Montgomery P."/>
            <person name="Pearson M."/>
            <person name="Howarth C."/>
            <person name="Larson L."/>
            <person name="Luoma S."/>
            <person name="White J."/>
            <person name="Alvarado L."/>
            <person name="Kodira C.D."/>
            <person name="Zeng Q."/>
            <person name="Oleary S."/>
            <person name="Yandava C."/>
            <person name="Denning D.W."/>
            <person name="Nierman W.C."/>
            <person name="Milne T."/>
            <person name="Madden K."/>
        </authorList>
    </citation>
    <scope>NUCLEOTIDE SEQUENCE [LARGE SCALE GENOMIC DNA]</scope>
    <source>
        <strain>NIH 2624 / FGSC A1156</strain>
    </source>
</reference>
<accession>Q0C9E6</accession>
<organism>
    <name type="scientific">Aspergillus terreus (strain NIH 2624 / FGSC A1156)</name>
    <dbReference type="NCBI Taxonomy" id="341663"/>
    <lineage>
        <taxon>Eukaryota</taxon>
        <taxon>Fungi</taxon>
        <taxon>Dikarya</taxon>
        <taxon>Ascomycota</taxon>
        <taxon>Pezizomycotina</taxon>
        <taxon>Eurotiomycetes</taxon>
        <taxon>Eurotiomycetidae</taxon>
        <taxon>Eurotiales</taxon>
        <taxon>Aspergillaceae</taxon>
        <taxon>Aspergillus</taxon>
        <taxon>Aspergillus subgen. Circumdati</taxon>
    </lineage>
</organism>
<comment type="function">
    <text evidence="2">Histone methyltransferase that trimethylates 'Lys-20' of histone H4 to form H4K20me3.</text>
</comment>
<comment type="catalytic activity">
    <reaction evidence="2 4">
        <text>L-lysyl(20)-[histone H4] + 3 S-adenosyl-L-methionine = N(6),N(6),N(6)-trimethyl-L-lysyl(20)-[histone H4] + 3 S-adenosyl-L-homocysteine + 3 H(+)</text>
        <dbReference type="Rhea" id="RHEA:64456"/>
        <dbReference type="Rhea" id="RHEA-COMP:15554"/>
        <dbReference type="Rhea" id="RHEA-COMP:15998"/>
        <dbReference type="ChEBI" id="CHEBI:15378"/>
        <dbReference type="ChEBI" id="CHEBI:29969"/>
        <dbReference type="ChEBI" id="CHEBI:57856"/>
        <dbReference type="ChEBI" id="CHEBI:59789"/>
        <dbReference type="ChEBI" id="CHEBI:61961"/>
        <dbReference type="EC" id="2.1.1.372"/>
    </reaction>
</comment>
<comment type="subcellular location">
    <subcellularLocation>
        <location evidence="1">Nucleus</location>
    </subcellularLocation>
    <subcellularLocation>
        <location evidence="1">Chromosome</location>
    </subcellularLocation>
</comment>
<comment type="similarity">
    <text evidence="4">Belongs to the class V-like SAM-binding methyltransferase superfamily. Histone-lysine methyltransferase family. Suvar4-20 subfamily.</text>
</comment>
<feature type="chain" id="PRO_0000281800" description="Histone-lysine N-methyltransferase set9">
    <location>
        <begin position="1"/>
        <end position="629"/>
    </location>
</feature>
<feature type="domain" description="SET" evidence="3">
    <location>
        <begin position="120"/>
        <end position="234"/>
    </location>
</feature>
<feature type="region of interest" description="Disordered" evidence="5">
    <location>
        <begin position="264"/>
        <end position="400"/>
    </location>
</feature>
<feature type="region of interest" description="Disordered" evidence="5">
    <location>
        <begin position="586"/>
        <end position="629"/>
    </location>
</feature>
<feature type="compositionally biased region" description="Polar residues" evidence="5">
    <location>
        <begin position="264"/>
        <end position="274"/>
    </location>
</feature>
<feature type="compositionally biased region" description="Polar residues" evidence="5">
    <location>
        <begin position="338"/>
        <end position="350"/>
    </location>
</feature>
<feature type="compositionally biased region" description="Polar residues" evidence="5">
    <location>
        <begin position="359"/>
        <end position="376"/>
    </location>
</feature>
<feature type="compositionally biased region" description="Polar residues" evidence="5">
    <location>
        <begin position="390"/>
        <end position="400"/>
    </location>
</feature>
<feature type="compositionally biased region" description="Basic and acidic residues" evidence="5">
    <location>
        <begin position="597"/>
        <end position="614"/>
    </location>
</feature>
<sequence>MAPSKARSSPAVERRDRLTLAKLASYDDVATDALVDRAYFWTNTRKNRTKYIPVRGIMDDKVAEILLHHVIVAKDTVKAERELLAISGIKKYMAKLPSDREKEWFRRHLRKYIQMYLPDCPFEVTTTNRYTITEHEAAICARKFIKQGQEIKYLSGTLVPMTREEEQDLDLKRKDFSIVMSSRRKTPSFFLGPARFANHDCDANGRLVTRGSEGMQVVATRDIEIGEEITVSYGEDYFGIDNCECLCLTCERAVRNGWAPQVDSEASSTASTPALNDETKSAHGSTSPQKRKYAPDADSDASASPTPQKRRKFSRQYSKLRTEVSLSGDVTAIEPDPEQNTKIAVETTTDVPKDKPATNGVTENESNARVSENQRATSDREPSSPLGVDESQNSSASTAPTSLFDVGIKLEESTEAFTQETLTTTKAGSVADSHGDGDCRQLTAGIEQEALSELSESLELDDKSGTVVKRRKRRTRRQVVPSVEDESHRVRVPGDYTKTSKLLAQSYDRWVECRTCKTWFLQHNSYLTRRECPRCERHSMLYGFQWPKTDKDGPLDDEERVMDHRTVHRFLYPEEEARISRRDRGVSFGVTPTPELSEPRTETEDSEACDERRNTRASRRRTQSLRMTM</sequence>